<feature type="chain" id="PRO_0000223860" description="Acetyl-coenzyme A carboxylase carboxyl transferase subunit alpha">
    <location>
        <begin position="1"/>
        <end position="319"/>
    </location>
</feature>
<feature type="domain" description="CoA carboxyltransferase C-terminal" evidence="2">
    <location>
        <begin position="32"/>
        <end position="293"/>
    </location>
</feature>
<dbReference type="EC" id="2.1.3.15" evidence="1"/>
<dbReference type="EMBL" id="AE009442">
    <property type="protein sequence ID" value="AAO28058.1"/>
    <property type="molecule type" value="Genomic_DNA"/>
</dbReference>
<dbReference type="RefSeq" id="WP_004572984.1">
    <property type="nucleotide sequence ID" value="NC_004556.1"/>
</dbReference>
<dbReference type="SMR" id="Q87EY1"/>
<dbReference type="KEGG" id="xft:PD_0164"/>
<dbReference type="HOGENOM" id="CLU_015486_0_2_6"/>
<dbReference type="UniPathway" id="UPA00655">
    <property type="reaction ID" value="UER00711"/>
</dbReference>
<dbReference type="Proteomes" id="UP000002516">
    <property type="component" value="Chromosome"/>
</dbReference>
<dbReference type="GO" id="GO:0009317">
    <property type="term" value="C:acetyl-CoA carboxylase complex"/>
    <property type="evidence" value="ECO:0007669"/>
    <property type="project" value="InterPro"/>
</dbReference>
<dbReference type="GO" id="GO:0003989">
    <property type="term" value="F:acetyl-CoA carboxylase activity"/>
    <property type="evidence" value="ECO:0007669"/>
    <property type="project" value="InterPro"/>
</dbReference>
<dbReference type="GO" id="GO:0005524">
    <property type="term" value="F:ATP binding"/>
    <property type="evidence" value="ECO:0007669"/>
    <property type="project" value="UniProtKB-KW"/>
</dbReference>
<dbReference type="GO" id="GO:0016743">
    <property type="term" value="F:carboxyl- or carbamoyltransferase activity"/>
    <property type="evidence" value="ECO:0007669"/>
    <property type="project" value="UniProtKB-UniRule"/>
</dbReference>
<dbReference type="GO" id="GO:0006633">
    <property type="term" value="P:fatty acid biosynthetic process"/>
    <property type="evidence" value="ECO:0007669"/>
    <property type="project" value="UniProtKB-KW"/>
</dbReference>
<dbReference type="GO" id="GO:2001295">
    <property type="term" value="P:malonyl-CoA biosynthetic process"/>
    <property type="evidence" value="ECO:0007669"/>
    <property type="project" value="UniProtKB-UniRule"/>
</dbReference>
<dbReference type="Gene3D" id="3.90.226.10">
    <property type="entry name" value="2-enoyl-CoA Hydratase, Chain A, domain 1"/>
    <property type="match status" value="1"/>
</dbReference>
<dbReference type="HAMAP" id="MF_00823">
    <property type="entry name" value="AcetylCoA_CT_alpha"/>
    <property type="match status" value="1"/>
</dbReference>
<dbReference type="InterPro" id="IPR001095">
    <property type="entry name" value="Acetyl_CoA_COase_a_su"/>
</dbReference>
<dbReference type="InterPro" id="IPR029045">
    <property type="entry name" value="ClpP/crotonase-like_dom_sf"/>
</dbReference>
<dbReference type="InterPro" id="IPR011763">
    <property type="entry name" value="COA_CT_C"/>
</dbReference>
<dbReference type="NCBIfam" id="TIGR00513">
    <property type="entry name" value="accA"/>
    <property type="match status" value="1"/>
</dbReference>
<dbReference type="NCBIfam" id="NF041504">
    <property type="entry name" value="AccA_sub"/>
    <property type="match status" value="1"/>
</dbReference>
<dbReference type="NCBIfam" id="NF004344">
    <property type="entry name" value="PRK05724.1"/>
    <property type="match status" value="1"/>
</dbReference>
<dbReference type="PANTHER" id="PTHR42853">
    <property type="entry name" value="ACETYL-COENZYME A CARBOXYLASE CARBOXYL TRANSFERASE SUBUNIT ALPHA"/>
    <property type="match status" value="1"/>
</dbReference>
<dbReference type="PANTHER" id="PTHR42853:SF3">
    <property type="entry name" value="ACETYL-COENZYME A CARBOXYLASE CARBOXYL TRANSFERASE SUBUNIT ALPHA, CHLOROPLASTIC"/>
    <property type="match status" value="1"/>
</dbReference>
<dbReference type="Pfam" id="PF03255">
    <property type="entry name" value="ACCA"/>
    <property type="match status" value="1"/>
</dbReference>
<dbReference type="PRINTS" id="PR01069">
    <property type="entry name" value="ACCCTRFRASEA"/>
</dbReference>
<dbReference type="SUPFAM" id="SSF52096">
    <property type="entry name" value="ClpP/crotonase"/>
    <property type="match status" value="1"/>
</dbReference>
<dbReference type="PROSITE" id="PS50989">
    <property type="entry name" value="COA_CT_CTER"/>
    <property type="match status" value="1"/>
</dbReference>
<proteinExistence type="inferred from homology"/>
<comment type="function">
    <text evidence="1">Component of the acetyl coenzyme A carboxylase (ACC) complex. First, biotin carboxylase catalyzes the carboxylation of biotin on its carrier protein (BCCP) and then the CO(2) group is transferred by the carboxyltransferase to acetyl-CoA to form malonyl-CoA.</text>
</comment>
<comment type="catalytic activity">
    <reaction evidence="1">
        <text>N(6)-carboxybiotinyl-L-lysyl-[protein] + acetyl-CoA = N(6)-biotinyl-L-lysyl-[protein] + malonyl-CoA</text>
        <dbReference type="Rhea" id="RHEA:54728"/>
        <dbReference type="Rhea" id="RHEA-COMP:10505"/>
        <dbReference type="Rhea" id="RHEA-COMP:10506"/>
        <dbReference type="ChEBI" id="CHEBI:57288"/>
        <dbReference type="ChEBI" id="CHEBI:57384"/>
        <dbReference type="ChEBI" id="CHEBI:83144"/>
        <dbReference type="ChEBI" id="CHEBI:83145"/>
        <dbReference type="EC" id="2.1.3.15"/>
    </reaction>
</comment>
<comment type="pathway">
    <text evidence="1">Lipid metabolism; malonyl-CoA biosynthesis; malonyl-CoA from acetyl-CoA: step 1/1.</text>
</comment>
<comment type="subunit">
    <text evidence="1">Acetyl-CoA carboxylase is a heterohexamer composed of biotin carboxyl carrier protein (AccB), biotin carboxylase (AccC) and two subunits each of ACCase subunit alpha (AccA) and ACCase subunit beta (AccD).</text>
</comment>
<comment type="subcellular location">
    <subcellularLocation>
        <location evidence="1">Cytoplasm</location>
    </subcellularLocation>
</comment>
<comment type="similarity">
    <text evidence="1">Belongs to the AccA family.</text>
</comment>
<evidence type="ECO:0000255" key="1">
    <source>
        <dbReference type="HAMAP-Rule" id="MF_00823"/>
    </source>
</evidence>
<evidence type="ECO:0000255" key="2">
    <source>
        <dbReference type="PROSITE-ProRule" id="PRU01137"/>
    </source>
</evidence>
<keyword id="KW-0067">ATP-binding</keyword>
<keyword id="KW-0963">Cytoplasm</keyword>
<keyword id="KW-0275">Fatty acid biosynthesis</keyword>
<keyword id="KW-0276">Fatty acid metabolism</keyword>
<keyword id="KW-0444">Lipid biosynthesis</keyword>
<keyword id="KW-0443">Lipid metabolism</keyword>
<keyword id="KW-0547">Nucleotide-binding</keyword>
<keyword id="KW-1185">Reference proteome</keyword>
<keyword id="KW-0808">Transferase</keyword>
<reference key="1">
    <citation type="journal article" date="2003" name="J. Bacteriol.">
        <title>Comparative analyses of the complete genome sequences of Pierce's disease and citrus variegated chlorosis strains of Xylella fastidiosa.</title>
        <authorList>
            <person name="Van Sluys M.A."/>
            <person name="de Oliveira M.C."/>
            <person name="Monteiro-Vitorello C.B."/>
            <person name="Miyaki C.Y."/>
            <person name="Furlan L.R."/>
            <person name="Camargo L.E.A."/>
            <person name="da Silva A.C.R."/>
            <person name="Moon D.H."/>
            <person name="Takita M.A."/>
            <person name="Lemos E.G.M."/>
            <person name="Machado M.A."/>
            <person name="Ferro M.I.T."/>
            <person name="da Silva F.R."/>
            <person name="Goldman M.H.S."/>
            <person name="Goldman G.H."/>
            <person name="Lemos M.V.F."/>
            <person name="El-Dorry H."/>
            <person name="Tsai S.M."/>
            <person name="Carrer H."/>
            <person name="Carraro D.M."/>
            <person name="de Oliveira R.C."/>
            <person name="Nunes L.R."/>
            <person name="Siqueira W.J."/>
            <person name="Coutinho L.L."/>
            <person name="Kimura E.T."/>
            <person name="Ferro E.S."/>
            <person name="Harakava R."/>
            <person name="Kuramae E.E."/>
            <person name="Marino C.L."/>
            <person name="Giglioti E."/>
            <person name="Abreu I.L."/>
            <person name="Alves L.M.C."/>
            <person name="do Amaral A.M."/>
            <person name="Baia G.S."/>
            <person name="Blanco S.R."/>
            <person name="Brito M.S."/>
            <person name="Cannavan F.S."/>
            <person name="Celestino A.V."/>
            <person name="da Cunha A.F."/>
            <person name="Fenille R.C."/>
            <person name="Ferro J.A."/>
            <person name="Formighieri E.F."/>
            <person name="Kishi L.T."/>
            <person name="Leoni S.G."/>
            <person name="Oliveira A.R."/>
            <person name="Rosa V.E. Jr."/>
            <person name="Sassaki F.T."/>
            <person name="Sena J.A.D."/>
            <person name="de Souza A.A."/>
            <person name="Truffi D."/>
            <person name="Tsukumo F."/>
            <person name="Yanai G.M."/>
            <person name="Zaros L.G."/>
            <person name="Civerolo E.L."/>
            <person name="Simpson A.J.G."/>
            <person name="Almeida N.F. Jr."/>
            <person name="Setubal J.C."/>
            <person name="Kitajima J.P."/>
        </authorList>
    </citation>
    <scope>NUCLEOTIDE SEQUENCE [LARGE SCALE GENOMIC DNA]</scope>
    <source>
        <strain>Temecula1 / ATCC 700964</strain>
    </source>
</reference>
<name>ACCA_XYLFT</name>
<protein>
    <recommendedName>
        <fullName evidence="1">Acetyl-coenzyme A carboxylase carboxyl transferase subunit alpha</fullName>
        <shortName evidence="1">ACCase subunit alpha</shortName>
        <shortName evidence="1">Acetyl-CoA carboxylase carboxyltransferase subunit alpha</shortName>
        <ecNumber evidence="1">2.1.3.15</ecNumber>
    </recommendedName>
</protein>
<gene>
    <name evidence="1" type="primary">accA</name>
    <name type="ordered locus">PD_0164</name>
</gene>
<organism>
    <name type="scientific">Xylella fastidiosa (strain Temecula1 / ATCC 700964)</name>
    <dbReference type="NCBI Taxonomy" id="183190"/>
    <lineage>
        <taxon>Bacteria</taxon>
        <taxon>Pseudomonadati</taxon>
        <taxon>Pseudomonadota</taxon>
        <taxon>Gammaproteobacteria</taxon>
        <taxon>Lysobacterales</taxon>
        <taxon>Lysobacteraceae</taxon>
        <taxon>Xylella</taxon>
    </lineage>
</organism>
<sequence>MNPNYLDFEQPIADLEAKIQDLRTASAGPSVNVDIEVRALENKLRLRTAQIFRNLSAWQISQLARHPRRPYTLDYISIVCDEFQELAGDRTLADDKAIVGGLARIGHRPVMLIGHQKGRDNKERLMRNFGMPKPEGYRKALRLMKLAERFGLPLLTFIDTMGAWPGIDAEERNQSEAIATNLIEMAELKIPVICTVIGEGGSGGALAIGIGDRTLMLEYSTYSVITPEGCASILWKDAAKASDAAEQLNLTARRLKEFGLIDKVIREPIGGAHRNPQQMANRLKAVLLNELEALDKVPLVTLLNQRHKRLRTYGAYENH</sequence>
<accession>Q87EY1</accession>